<feature type="chain" id="PRO_0000068458" description="Protein TraJ">
    <location>
        <begin position="1"/>
        <end position="201"/>
    </location>
</feature>
<reference key="1">
    <citation type="journal article" date="1986" name="J. Bacteriol.">
        <title>Nucleotide sequences of the R1-19 plasmid transfer genes traM, finP, traJ, and traY and the traYZ promoter.</title>
        <authorList>
            <person name="Finlay B.B."/>
            <person name="Frost L.S."/>
            <person name="Paranchych W."/>
        </authorList>
    </citation>
    <scope>NUCLEOTIDE SEQUENCE [GENOMIC DNA]</scope>
</reference>
<geneLocation type="plasmid">
    <name>IncFII R1-19</name>
    <name>R1 drd-19</name>
</geneLocation>
<name>TRAJ3_ECOLX</name>
<keyword id="KW-0010">Activator</keyword>
<keyword id="KW-0184">Conjugation</keyword>
<keyword id="KW-0963">Cytoplasm</keyword>
<keyword id="KW-0614">Plasmid</keyword>
<keyword id="KW-0804">Transcription</keyword>
<keyword id="KW-0805">Transcription regulation</keyword>
<proteinExistence type="inferred from homology"/>
<accession>P13949</accession>
<gene>
    <name type="primary">traJ</name>
</gene>
<sequence length="201" mass="23238">MCALDRRERPLNSQSVNKYILNVQNIYRNSPVPVCVRNKNRKILYANGAFIELFSREDKPLSGESYIRLQVEIFLSSLELECQALGHGSAFCRRFNFHGEIYQIRMENVSFYNDESVVLWQINPFPDYPFFALNQSGSNTNTSDKLTIWNDLSPGTLVVFSFYMLGVGHATIARELGITDRASEDRIKPVKRKIKEFFEHV</sequence>
<comment type="function">
    <text>This protein is essential for positively regulating the expression of transfer genes that are involved in the conjugal transfer of DNA between bacterial cells.</text>
</comment>
<comment type="subcellular location">
    <subcellularLocation>
        <location evidence="1">Cytoplasm</location>
    </subcellularLocation>
</comment>
<dbReference type="EMBL" id="AH003433">
    <property type="protein sequence ID" value="AAA92657.1"/>
    <property type="molecule type" value="Genomic_DNA"/>
</dbReference>
<dbReference type="SMR" id="P13949"/>
<dbReference type="GO" id="GO:0005737">
    <property type="term" value="C:cytoplasm"/>
    <property type="evidence" value="ECO:0007669"/>
    <property type="project" value="UniProtKB-SubCell"/>
</dbReference>
<dbReference type="GO" id="GO:0006355">
    <property type="term" value="P:regulation of DNA-templated transcription"/>
    <property type="evidence" value="ECO:0007669"/>
    <property type="project" value="InterPro"/>
</dbReference>
<dbReference type="Gene3D" id="3.30.450.20">
    <property type="entry name" value="PAS domain"/>
    <property type="match status" value="1"/>
</dbReference>
<dbReference type="InterPro" id="IPR035965">
    <property type="entry name" value="PAS-like_dom_sf"/>
</dbReference>
<dbReference type="InterPro" id="IPR013767">
    <property type="entry name" value="PAS_fold"/>
</dbReference>
<dbReference type="InterPro" id="IPR016384">
    <property type="entry name" value="TraJ_R1"/>
</dbReference>
<dbReference type="Pfam" id="PF00989">
    <property type="entry name" value="PAS"/>
    <property type="match status" value="1"/>
</dbReference>
<dbReference type="PIRSF" id="PIRSF003268">
    <property type="entry name" value="TraJ_R1"/>
    <property type="match status" value="1"/>
</dbReference>
<dbReference type="SUPFAM" id="SSF55785">
    <property type="entry name" value="PYP-like sensor domain (PAS domain)"/>
    <property type="match status" value="1"/>
</dbReference>
<evidence type="ECO:0000250" key="1"/>
<protein>
    <recommendedName>
        <fullName>Protein TraJ</fullName>
    </recommendedName>
</protein>
<organism>
    <name type="scientific">Escherichia coli</name>
    <dbReference type="NCBI Taxonomy" id="562"/>
    <lineage>
        <taxon>Bacteria</taxon>
        <taxon>Pseudomonadati</taxon>
        <taxon>Pseudomonadota</taxon>
        <taxon>Gammaproteobacteria</taxon>
        <taxon>Enterobacterales</taxon>
        <taxon>Enterobacteriaceae</taxon>
        <taxon>Escherichia</taxon>
    </lineage>
</organism>